<name>ARGB_SHESW</name>
<reference key="1">
    <citation type="submission" date="2006-12" db="EMBL/GenBank/DDBJ databases">
        <title>Complete sequence of Shewanella sp. W3-18-1.</title>
        <authorList>
            <consortium name="US DOE Joint Genome Institute"/>
            <person name="Copeland A."/>
            <person name="Lucas S."/>
            <person name="Lapidus A."/>
            <person name="Barry K."/>
            <person name="Detter J.C."/>
            <person name="Glavina del Rio T."/>
            <person name="Hammon N."/>
            <person name="Israni S."/>
            <person name="Dalin E."/>
            <person name="Tice H."/>
            <person name="Pitluck S."/>
            <person name="Chain P."/>
            <person name="Malfatti S."/>
            <person name="Shin M."/>
            <person name="Vergez L."/>
            <person name="Schmutz J."/>
            <person name="Larimer F."/>
            <person name="Land M."/>
            <person name="Hauser L."/>
            <person name="Kyrpides N."/>
            <person name="Lykidis A."/>
            <person name="Tiedje J."/>
            <person name="Richardson P."/>
        </authorList>
    </citation>
    <scope>NUCLEOTIDE SEQUENCE [LARGE SCALE GENOMIC DNA]</scope>
    <source>
        <strain>W3-18-1</strain>
    </source>
</reference>
<evidence type="ECO:0000255" key="1">
    <source>
        <dbReference type="HAMAP-Rule" id="MF_00082"/>
    </source>
</evidence>
<dbReference type="EC" id="2.7.2.8" evidence="1"/>
<dbReference type="EMBL" id="CP000503">
    <property type="protein sequence ID" value="ABM26663.1"/>
    <property type="molecule type" value="Genomic_DNA"/>
</dbReference>
<dbReference type="RefSeq" id="WP_007644494.1">
    <property type="nucleotide sequence ID" value="NC_008750.1"/>
</dbReference>
<dbReference type="SMR" id="A1RPR8"/>
<dbReference type="KEGG" id="shw:Sputw3181_3859"/>
<dbReference type="HOGENOM" id="CLU_053680_1_1_6"/>
<dbReference type="UniPathway" id="UPA00068">
    <property type="reaction ID" value="UER00107"/>
</dbReference>
<dbReference type="Proteomes" id="UP000002597">
    <property type="component" value="Chromosome"/>
</dbReference>
<dbReference type="GO" id="GO:0005737">
    <property type="term" value="C:cytoplasm"/>
    <property type="evidence" value="ECO:0007669"/>
    <property type="project" value="UniProtKB-SubCell"/>
</dbReference>
<dbReference type="GO" id="GO:0003991">
    <property type="term" value="F:acetylglutamate kinase activity"/>
    <property type="evidence" value="ECO:0007669"/>
    <property type="project" value="UniProtKB-UniRule"/>
</dbReference>
<dbReference type="GO" id="GO:0005524">
    <property type="term" value="F:ATP binding"/>
    <property type="evidence" value="ECO:0007669"/>
    <property type="project" value="UniProtKB-UniRule"/>
</dbReference>
<dbReference type="GO" id="GO:0042450">
    <property type="term" value="P:arginine biosynthetic process via ornithine"/>
    <property type="evidence" value="ECO:0007669"/>
    <property type="project" value="UniProtKB-UniRule"/>
</dbReference>
<dbReference type="GO" id="GO:0006526">
    <property type="term" value="P:L-arginine biosynthetic process"/>
    <property type="evidence" value="ECO:0007669"/>
    <property type="project" value="UniProtKB-UniPathway"/>
</dbReference>
<dbReference type="FunFam" id="3.40.1160.10:FF:000008">
    <property type="entry name" value="Acetylglutamate kinase"/>
    <property type="match status" value="1"/>
</dbReference>
<dbReference type="Gene3D" id="3.40.1160.10">
    <property type="entry name" value="Acetylglutamate kinase-like"/>
    <property type="match status" value="1"/>
</dbReference>
<dbReference type="HAMAP" id="MF_00082">
    <property type="entry name" value="ArgB"/>
    <property type="match status" value="1"/>
</dbReference>
<dbReference type="InterPro" id="IPR036393">
    <property type="entry name" value="AceGlu_kinase-like_sf"/>
</dbReference>
<dbReference type="InterPro" id="IPR004662">
    <property type="entry name" value="AcgluKinase_fam"/>
</dbReference>
<dbReference type="InterPro" id="IPR037528">
    <property type="entry name" value="ArgB"/>
</dbReference>
<dbReference type="InterPro" id="IPR001048">
    <property type="entry name" value="Asp/Glu/Uridylate_kinase"/>
</dbReference>
<dbReference type="NCBIfam" id="TIGR00761">
    <property type="entry name" value="argB"/>
    <property type="match status" value="1"/>
</dbReference>
<dbReference type="PANTHER" id="PTHR23342">
    <property type="entry name" value="N-ACETYLGLUTAMATE SYNTHASE"/>
    <property type="match status" value="1"/>
</dbReference>
<dbReference type="PANTHER" id="PTHR23342:SF0">
    <property type="entry name" value="N-ACETYLGLUTAMATE SYNTHASE, MITOCHONDRIAL"/>
    <property type="match status" value="1"/>
</dbReference>
<dbReference type="Pfam" id="PF00696">
    <property type="entry name" value="AA_kinase"/>
    <property type="match status" value="1"/>
</dbReference>
<dbReference type="PIRSF" id="PIRSF000728">
    <property type="entry name" value="NAGK"/>
    <property type="match status" value="1"/>
</dbReference>
<dbReference type="SUPFAM" id="SSF53633">
    <property type="entry name" value="Carbamate kinase-like"/>
    <property type="match status" value="1"/>
</dbReference>
<accession>A1RPR8</accession>
<gene>
    <name evidence="1" type="primary">argB</name>
    <name type="ordered locus">Sputw3181_3859</name>
</gene>
<protein>
    <recommendedName>
        <fullName evidence="1">Acetylglutamate kinase</fullName>
        <ecNumber evidence="1">2.7.2.8</ecNumber>
    </recommendedName>
    <alternativeName>
        <fullName evidence="1">N-acetyl-L-glutamate 5-phosphotransferase</fullName>
    </alternativeName>
    <alternativeName>
        <fullName evidence="1">NAG kinase</fullName>
        <shortName evidence="1">NAGK</shortName>
    </alternativeName>
</protein>
<organism>
    <name type="scientific">Shewanella sp. (strain W3-18-1)</name>
    <dbReference type="NCBI Taxonomy" id="351745"/>
    <lineage>
        <taxon>Bacteria</taxon>
        <taxon>Pseudomonadati</taxon>
        <taxon>Pseudomonadota</taxon>
        <taxon>Gammaproteobacteria</taxon>
        <taxon>Alteromonadales</taxon>
        <taxon>Shewanellaceae</taxon>
        <taxon>Shewanella</taxon>
    </lineage>
</organism>
<sequence>MSTNNSVLVLKVGGALLQCEMGMARLMDTAAAMLANGQQVLMVHGGGCLVDEQLAANGMETVKLEGLRVTPPEQMPIIAGALAGTSNKILQGAATKAGIVSVGMSLADGNTVSAKIKDERLGLVGEVTPKDGTYLKFILEQGWMPICSSIAMMDDGQMLNVNADQAATALAKLVGGKLVLLSDVSGVLDGKGQLIHSLNGKQIADLVKQGVIEKGMKVKVEAALEVAQWMGQAVQVASWRDASQLIALAKGEAVGTQIQP</sequence>
<keyword id="KW-0028">Amino-acid biosynthesis</keyword>
<keyword id="KW-0055">Arginine biosynthesis</keyword>
<keyword id="KW-0067">ATP-binding</keyword>
<keyword id="KW-0963">Cytoplasm</keyword>
<keyword id="KW-0418">Kinase</keyword>
<keyword id="KW-0547">Nucleotide-binding</keyword>
<keyword id="KW-0808">Transferase</keyword>
<proteinExistence type="inferred from homology"/>
<comment type="function">
    <text evidence="1">Catalyzes the ATP-dependent phosphorylation of N-acetyl-L-glutamate.</text>
</comment>
<comment type="catalytic activity">
    <reaction evidence="1">
        <text>N-acetyl-L-glutamate + ATP = N-acetyl-L-glutamyl 5-phosphate + ADP</text>
        <dbReference type="Rhea" id="RHEA:14629"/>
        <dbReference type="ChEBI" id="CHEBI:30616"/>
        <dbReference type="ChEBI" id="CHEBI:44337"/>
        <dbReference type="ChEBI" id="CHEBI:57936"/>
        <dbReference type="ChEBI" id="CHEBI:456216"/>
        <dbReference type="EC" id="2.7.2.8"/>
    </reaction>
</comment>
<comment type="pathway">
    <text evidence="1">Amino-acid biosynthesis; L-arginine biosynthesis; N(2)-acetyl-L-ornithine from L-glutamate: step 2/4.</text>
</comment>
<comment type="subcellular location">
    <subcellularLocation>
        <location evidence="1">Cytoplasm</location>
    </subcellularLocation>
</comment>
<comment type="similarity">
    <text evidence="1">Belongs to the acetylglutamate kinase family. ArgB subfamily.</text>
</comment>
<feature type="chain" id="PRO_1000010545" description="Acetylglutamate kinase">
    <location>
        <begin position="1"/>
        <end position="260"/>
    </location>
</feature>
<feature type="binding site" evidence="1">
    <location>
        <begin position="46"/>
        <end position="47"/>
    </location>
    <ligand>
        <name>substrate</name>
    </ligand>
</feature>
<feature type="binding site" evidence="1">
    <location>
        <position position="68"/>
    </location>
    <ligand>
        <name>substrate</name>
    </ligand>
</feature>
<feature type="binding site" evidence="1">
    <location>
        <position position="160"/>
    </location>
    <ligand>
        <name>substrate</name>
    </ligand>
</feature>
<feature type="site" description="Transition state stabilizer" evidence="1">
    <location>
        <position position="11"/>
    </location>
</feature>
<feature type="site" description="Transition state stabilizer" evidence="1">
    <location>
        <position position="219"/>
    </location>
</feature>